<reference key="1">
    <citation type="journal article" date="2006" name="BMC Genomics">
        <title>Complete genome sequence of Shigella flexneri 5b and comparison with Shigella flexneri 2a.</title>
        <authorList>
            <person name="Nie H."/>
            <person name="Yang F."/>
            <person name="Zhang X."/>
            <person name="Yang J."/>
            <person name="Chen L."/>
            <person name="Wang J."/>
            <person name="Xiong Z."/>
            <person name="Peng J."/>
            <person name="Sun L."/>
            <person name="Dong J."/>
            <person name="Xue Y."/>
            <person name="Xu X."/>
            <person name="Chen S."/>
            <person name="Yao Z."/>
            <person name="Shen Y."/>
            <person name="Jin Q."/>
        </authorList>
    </citation>
    <scope>NUCLEOTIDE SEQUENCE [LARGE SCALE GENOMIC DNA]</scope>
    <source>
        <strain>8401</strain>
    </source>
</reference>
<dbReference type="EC" id="2.7.7.4" evidence="2"/>
<dbReference type="EMBL" id="CP000266">
    <property type="protein sequence ID" value="ABF04833.1"/>
    <property type="molecule type" value="Genomic_DNA"/>
</dbReference>
<dbReference type="RefSeq" id="WP_001098972.1">
    <property type="nucleotide sequence ID" value="NC_008258.1"/>
</dbReference>
<dbReference type="SMR" id="Q0T1I2"/>
<dbReference type="KEGG" id="sfv:SFV_2747"/>
<dbReference type="HOGENOM" id="CLU_007265_5_2_6"/>
<dbReference type="UniPathway" id="UPA00140">
    <property type="reaction ID" value="UER00204"/>
</dbReference>
<dbReference type="Proteomes" id="UP000000659">
    <property type="component" value="Chromosome"/>
</dbReference>
<dbReference type="GO" id="GO:0005524">
    <property type="term" value="F:ATP binding"/>
    <property type="evidence" value="ECO:0007669"/>
    <property type="project" value="UniProtKB-KW"/>
</dbReference>
<dbReference type="GO" id="GO:0005525">
    <property type="term" value="F:GTP binding"/>
    <property type="evidence" value="ECO:0007669"/>
    <property type="project" value="UniProtKB-UniRule"/>
</dbReference>
<dbReference type="GO" id="GO:0003924">
    <property type="term" value="F:GTPase activity"/>
    <property type="evidence" value="ECO:0007669"/>
    <property type="project" value="InterPro"/>
</dbReference>
<dbReference type="GO" id="GO:0004781">
    <property type="term" value="F:sulfate adenylyltransferase (ATP) activity"/>
    <property type="evidence" value="ECO:0007669"/>
    <property type="project" value="UniProtKB-UniRule"/>
</dbReference>
<dbReference type="GO" id="GO:0070814">
    <property type="term" value="P:hydrogen sulfide biosynthetic process"/>
    <property type="evidence" value="ECO:0007669"/>
    <property type="project" value="UniProtKB-UniRule"/>
</dbReference>
<dbReference type="GO" id="GO:0000103">
    <property type="term" value="P:sulfate assimilation"/>
    <property type="evidence" value="ECO:0007669"/>
    <property type="project" value="UniProtKB-UniRule"/>
</dbReference>
<dbReference type="CDD" id="cd04166">
    <property type="entry name" value="CysN_ATPS"/>
    <property type="match status" value="1"/>
</dbReference>
<dbReference type="CDD" id="cd03695">
    <property type="entry name" value="CysN_NodQ_II"/>
    <property type="match status" value="1"/>
</dbReference>
<dbReference type="CDD" id="cd04095">
    <property type="entry name" value="CysN_NoDQ_III"/>
    <property type="match status" value="1"/>
</dbReference>
<dbReference type="FunFam" id="2.40.30.10:FF:000027">
    <property type="entry name" value="Sulfate adenylyltransferase subunit 1"/>
    <property type="match status" value="1"/>
</dbReference>
<dbReference type="FunFam" id="2.40.30.10:FF:000031">
    <property type="entry name" value="Sulfate adenylyltransferase subunit 1"/>
    <property type="match status" value="1"/>
</dbReference>
<dbReference type="FunFam" id="3.40.50.300:FF:000119">
    <property type="entry name" value="Sulfate adenylyltransferase subunit 1"/>
    <property type="match status" value="1"/>
</dbReference>
<dbReference type="Gene3D" id="3.40.50.300">
    <property type="entry name" value="P-loop containing nucleotide triphosphate hydrolases"/>
    <property type="match status" value="1"/>
</dbReference>
<dbReference type="Gene3D" id="2.40.30.10">
    <property type="entry name" value="Translation factors"/>
    <property type="match status" value="2"/>
</dbReference>
<dbReference type="HAMAP" id="MF_00062">
    <property type="entry name" value="Sulf_adenylyltr_sub1"/>
    <property type="match status" value="1"/>
</dbReference>
<dbReference type="InterPro" id="IPR041757">
    <property type="entry name" value="CysN_GTP-bd"/>
</dbReference>
<dbReference type="InterPro" id="IPR044138">
    <property type="entry name" value="CysN_II"/>
</dbReference>
<dbReference type="InterPro" id="IPR044139">
    <property type="entry name" value="CysN_NoDQ_III"/>
</dbReference>
<dbReference type="InterPro" id="IPR031157">
    <property type="entry name" value="G_TR_CS"/>
</dbReference>
<dbReference type="InterPro" id="IPR054696">
    <property type="entry name" value="GTP-eEF1A_C"/>
</dbReference>
<dbReference type="InterPro" id="IPR027417">
    <property type="entry name" value="P-loop_NTPase"/>
</dbReference>
<dbReference type="InterPro" id="IPR005225">
    <property type="entry name" value="Small_GTP-bd"/>
</dbReference>
<dbReference type="InterPro" id="IPR011779">
    <property type="entry name" value="SO4_adenylTrfase_lsu"/>
</dbReference>
<dbReference type="InterPro" id="IPR000795">
    <property type="entry name" value="T_Tr_GTP-bd_dom"/>
</dbReference>
<dbReference type="InterPro" id="IPR050100">
    <property type="entry name" value="TRAFAC_GTPase_members"/>
</dbReference>
<dbReference type="InterPro" id="IPR009000">
    <property type="entry name" value="Transl_B-barrel_sf"/>
</dbReference>
<dbReference type="InterPro" id="IPR009001">
    <property type="entry name" value="Transl_elong_EF1A/Init_IF2_C"/>
</dbReference>
<dbReference type="NCBIfam" id="TIGR02034">
    <property type="entry name" value="CysN"/>
    <property type="match status" value="1"/>
</dbReference>
<dbReference type="NCBIfam" id="NF003478">
    <property type="entry name" value="PRK05124.1"/>
    <property type="match status" value="1"/>
</dbReference>
<dbReference type="NCBIfam" id="TIGR00231">
    <property type="entry name" value="small_GTP"/>
    <property type="match status" value="1"/>
</dbReference>
<dbReference type="PANTHER" id="PTHR23115">
    <property type="entry name" value="TRANSLATION FACTOR"/>
    <property type="match status" value="1"/>
</dbReference>
<dbReference type="Pfam" id="PF22594">
    <property type="entry name" value="GTP-eEF1A_C"/>
    <property type="match status" value="1"/>
</dbReference>
<dbReference type="Pfam" id="PF00009">
    <property type="entry name" value="GTP_EFTU"/>
    <property type="match status" value="1"/>
</dbReference>
<dbReference type="PRINTS" id="PR00315">
    <property type="entry name" value="ELONGATNFCT"/>
</dbReference>
<dbReference type="SUPFAM" id="SSF50465">
    <property type="entry name" value="EF-Tu/eEF-1alpha/eIF2-gamma C-terminal domain"/>
    <property type="match status" value="1"/>
</dbReference>
<dbReference type="SUPFAM" id="SSF52540">
    <property type="entry name" value="P-loop containing nucleoside triphosphate hydrolases"/>
    <property type="match status" value="1"/>
</dbReference>
<dbReference type="SUPFAM" id="SSF50447">
    <property type="entry name" value="Translation proteins"/>
    <property type="match status" value="1"/>
</dbReference>
<dbReference type="PROSITE" id="PS00301">
    <property type="entry name" value="G_TR_1"/>
    <property type="match status" value="1"/>
</dbReference>
<dbReference type="PROSITE" id="PS51722">
    <property type="entry name" value="G_TR_2"/>
    <property type="match status" value="1"/>
</dbReference>
<feature type="chain" id="PRO_1000008911" description="Sulfate adenylyltransferase subunit 1">
    <location>
        <begin position="1"/>
        <end position="475"/>
    </location>
</feature>
<feature type="domain" description="tr-type G">
    <location>
        <begin position="25"/>
        <end position="239"/>
    </location>
</feature>
<feature type="region of interest" description="G1" evidence="1">
    <location>
        <begin position="34"/>
        <end position="41"/>
    </location>
</feature>
<feature type="region of interest" description="G2" evidence="1">
    <location>
        <begin position="92"/>
        <end position="96"/>
    </location>
</feature>
<feature type="region of interest" description="G3" evidence="1">
    <location>
        <begin position="113"/>
        <end position="116"/>
    </location>
</feature>
<feature type="region of interest" description="G4" evidence="1">
    <location>
        <begin position="168"/>
        <end position="171"/>
    </location>
</feature>
<feature type="region of interest" description="G5" evidence="1">
    <location>
        <begin position="206"/>
        <end position="208"/>
    </location>
</feature>
<feature type="binding site" evidence="2">
    <location>
        <begin position="34"/>
        <end position="41"/>
    </location>
    <ligand>
        <name>GTP</name>
        <dbReference type="ChEBI" id="CHEBI:37565"/>
    </ligand>
</feature>
<feature type="binding site" evidence="2">
    <location>
        <begin position="113"/>
        <end position="117"/>
    </location>
    <ligand>
        <name>GTP</name>
        <dbReference type="ChEBI" id="CHEBI:37565"/>
    </ligand>
</feature>
<feature type="binding site" evidence="2">
    <location>
        <begin position="168"/>
        <end position="171"/>
    </location>
    <ligand>
        <name>GTP</name>
        <dbReference type="ChEBI" id="CHEBI:37565"/>
    </ligand>
</feature>
<name>CYSN_SHIF8</name>
<gene>
    <name evidence="2" type="primary">cysN</name>
    <name type="ordered locus">SFV_2747</name>
</gene>
<keyword id="KW-0067">ATP-binding</keyword>
<keyword id="KW-0342">GTP-binding</keyword>
<keyword id="KW-0547">Nucleotide-binding</keyword>
<keyword id="KW-0548">Nucleotidyltransferase</keyword>
<keyword id="KW-0808">Transferase</keyword>
<accession>Q0T1I2</accession>
<proteinExistence type="inferred from homology"/>
<sequence length="475" mass="52650">MNTVLAQQIANEGGVEAWMIAQQHKSLLRFLTCGSVDDGKSTLIGRLLHDTRQIYEDQLSSLHNDSKRHGTQGEKLDLALLVDGLQAEREQGITIDVAYRYFSTEKRKFIIADTPGHEQYTRNMATGASTCELAILLIDARKGVLDQTRRHSFISTLLGIKHLVVAINKMDLVDYSEETFTRIREDYLTFAGQLPGNLDIRFVPLSALEGDNVASQSESMPWYSGLTLLEVLETVEIQRVVNAQPMRFPVQYVNRPNLDFRGYAGMLASGRVEVGQRVKVLPSGVESNVARIVTFDGDREEVFAGEAITLVLTDEIDISRGDLLLAADEALPAVQSASVDVVWMAEQPLSPGQSYDIKIAGKKTRARVDGIRYQVDINNLTQREVENLPLNGIGLVDLTFDEPLVLDRYQQNPVTGGLIFIDRLSNVTVGAGMVHEPVSQATAASSEFSAFELELNALVRRHFPHWGARDLLGDK</sequence>
<protein>
    <recommendedName>
        <fullName evidence="2">Sulfate adenylyltransferase subunit 1</fullName>
        <ecNumber evidence="2">2.7.7.4</ecNumber>
    </recommendedName>
    <alternativeName>
        <fullName evidence="2">ATP-sulfurylase large subunit</fullName>
    </alternativeName>
    <alternativeName>
        <fullName evidence="2">Sulfate adenylate transferase</fullName>
        <shortName evidence="2">SAT</shortName>
    </alternativeName>
</protein>
<organism>
    <name type="scientific">Shigella flexneri serotype 5b (strain 8401)</name>
    <dbReference type="NCBI Taxonomy" id="373384"/>
    <lineage>
        <taxon>Bacteria</taxon>
        <taxon>Pseudomonadati</taxon>
        <taxon>Pseudomonadota</taxon>
        <taxon>Gammaproteobacteria</taxon>
        <taxon>Enterobacterales</taxon>
        <taxon>Enterobacteriaceae</taxon>
        <taxon>Shigella</taxon>
    </lineage>
</organism>
<comment type="function">
    <text evidence="2">With CysD forms the ATP sulfurylase (ATPS) that catalyzes the adenylation of sulfate producing adenosine 5'-phosphosulfate (APS) and diphosphate, the first enzymatic step in sulfur assimilation pathway. APS synthesis involves the formation of a high-energy phosphoric-sulfuric acid anhydride bond driven by GTP hydrolysis by CysN coupled to ATP hydrolysis by CysD.</text>
</comment>
<comment type="catalytic activity">
    <reaction evidence="2">
        <text>sulfate + ATP + H(+) = adenosine 5'-phosphosulfate + diphosphate</text>
        <dbReference type="Rhea" id="RHEA:18133"/>
        <dbReference type="ChEBI" id="CHEBI:15378"/>
        <dbReference type="ChEBI" id="CHEBI:16189"/>
        <dbReference type="ChEBI" id="CHEBI:30616"/>
        <dbReference type="ChEBI" id="CHEBI:33019"/>
        <dbReference type="ChEBI" id="CHEBI:58243"/>
        <dbReference type="EC" id="2.7.7.4"/>
    </reaction>
</comment>
<comment type="pathway">
    <text evidence="2">Sulfur metabolism; hydrogen sulfide biosynthesis; sulfite from sulfate: step 1/3.</text>
</comment>
<comment type="subunit">
    <text evidence="2">Heterodimer composed of CysD, the smaller subunit, and CysN.</text>
</comment>
<comment type="similarity">
    <text evidence="2">Belongs to the TRAFAC class translation factor GTPase superfamily. Classic translation factor GTPase family. CysN/NodQ subfamily.</text>
</comment>
<evidence type="ECO:0000250" key="1"/>
<evidence type="ECO:0000255" key="2">
    <source>
        <dbReference type="HAMAP-Rule" id="MF_00062"/>
    </source>
</evidence>